<feature type="chain" id="PRO_1000194020" description="Large ribosomal subunit protein uL29">
    <location>
        <begin position="1"/>
        <end position="62"/>
    </location>
</feature>
<proteinExistence type="inferred from homology"/>
<gene>
    <name evidence="1" type="primary">rpmC</name>
    <name type="ordered locus">Geob_3617</name>
</gene>
<reference key="1">
    <citation type="submission" date="2009-01" db="EMBL/GenBank/DDBJ databases">
        <title>Complete sequence of Geobacter sp. FRC-32.</title>
        <authorList>
            <consortium name="US DOE Joint Genome Institute"/>
            <person name="Lucas S."/>
            <person name="Copeland A."/>
            <person name="Lapidus A."/>
            <person name="Glavina del Rio T."/>
            <person name="Dalin E."/>
            <person name="Tice H."/>
            <person name="Bruce D."/>
            <person name="Goodwin L."/>
            <person name="Pitluck S."/>
            <person name="Saunders E."/>
            <person name="Brettin T."/>
            <person name="Detter J.C."/>
            <person name="Han C."/>
            <person name="Larimer F."/>
            <person name="Land M."/>
            <person name="Hauser L."/>
            <person name="Kyrpides N."/>
            <person name="Ovchinnikova G."/>
            <person name="Kostka J."/>
            <person name="Richardson P."/>
        </authorList>
    </citation>
    <scope>NUCLEOTIDE SEQUENCE [LARGE SCALE GENOMIC DNA]</scope>
    <source>
        <strain>DSM 22248 / JCM 15807 / FRC-32</strain>
    </source>
</reference>
<comment type="similarity">
    <text evidence="1">Belongs to the universal ribosomal protein uL29 family.</text>
</comment>
<keyword id="KW-1185">Reference proteome</keyword>
<keyword id="KW-0687">Ribonucleoprotein</keyword>
<keyword id="KW-0689">Ribosomal protein</keyword>
<name>RL29_GEODF</name>
<organism>
    <name type="scientific">Geotalea daltonii (strain DSM 22248 / JCM 15807 / FRC-32)</name>
    <name type="common">Geobacter daltonii</name>
    <dbReference type="NCBI Taxonomy" id="316067"/>
    <lineage>
        <taxon>Bacteria</taxon>
        <taxon>Pseudomonadati</taxon>
        <taxon>Thermodesulfobacteriota</taxon>
        <taxon>Desulfuromonadia</taxon>
        <taxon>Geobacterales</taxon>
        <taxon>Geobacteraceae</taxon>
        <taxon>Geotalea</taxon>
    </lineage>
</organism>
<accession>B9M6H0</accession>
<sequence length="62" mass="7070">MKASDLNKSTVDELRSTEAELTKELFNLKFQLHTGRLEDTSKPARIKKDIARVKSVLRAKRG</sequence>
<protein>
    <recommendedName>
        <fullName evidence="1">Large ribosomal subunit protein uL29</fullName>
    </recommendedName>
    <alternativeName>
        <fullName evidence="2">50S ribosomal protein L29</fullName>
    </alternativeName>
</protein>
<dbReference type="EMBL" id="CP001390">
    <property type="protein sequence ID" value="ACM21958.1"/>
    <property type="molecule type" value="Genomic_DNA"/>
</dbReference>
<dbReference type="RefSeq" id="WP_012648685.1">
    <property type="nucleotide sequence ID" value="NC_011979.1"/>
</dbReference>
<dbReference type="SMR" id="B9M6H0"/>
<dbReference type="STRING" id="316067.Geob_3617"/>
<dbReference type="KEGG" id="geo:Geob_3617"/>
<dbReference type="eggNOG" id="COG0255">
    <property type="taxonomic scope" value="Bacteria"/>
</dbReference>
<dbReference type="HOGENOM" id="CLU_158491_5_2_7"/>
<dbReference type="OrthoDB" id="9815192at2"/>
<dbReference type="Proteomes" id="UP000007721">
    <property type="component" value="Chromosome"/>
</dbReference>
<dbReference type="GO" id="GO:1990904">
    <property type="term" value="C:ribonucleoprotein complex"/>
    <property type="evidence" value="ECO:0007669"/>
    <property type="project" value="UniProtKB-KW"/>
</dbReference>
<dbReference type="GO" id="GO:0005840">
    <property type="term" value="C:ribosome"/>
    <property type="evidence" value="ECO:0007669"/>
    <property type="project" value="UniProtKB-KW"/>
</dbReference>
<dbReference type="GO" id="GO:0003735">
    <property type="term" value="F:structural constituent of ribosome"/>
    <property type="evidence" value="ECO:0007669"/>
    <property type="project" value="InterPro"/>
</dbReference>
<dbReference type="GO" id="GO:0006412">
    <property type="term" value="P:translation"/>
    <property type="evidence" value="ECO:0007669"/>
    <property type="project" value="UniProtKB-UniRule"/>
</dbReference>
<dbReference type="CDD" id="cd00427">
    <property type="entry name" value="Ribosomal_L29_HIP"/>
    <property type="match status" value="1"/>
</dbReference>
<dbReference type="FunFam" id="1.10.287.310:FF:000001">
    <property type="entry name" value="50S ribosomal protein L29"/>
    <property type="match status" value="1"/>
</dbReference>
<dbReference type="Gene3D" id="1.10.287.310">
    <property type="match status" value="1"/>
</dbReference>
<dbReference type="HAMAP" id="MF_00374">
    <property type="entry name" value="Ribosomal_uL29"/>
    <property type="match status" value="1"/>
</dbReference>
<dbReference type="InterPro" id="IPR001854">
    <property type="entry name" value="Ribosomal_uL29"/>
</dbReference>
<dbReference type="InterPro" id="IPR036049">
    <property type="entry name" value="Ribosomal_uL29_sf"/>
</dbReference>
<dbReference type="NCBIfam" id="TIGR00012">
    <property type="entry name" value="L29"/>
    <property type="match status" value="1"/>
</dbReference>
<dbReference type="Pfam" id="PF00831">
    <property type="entry name" value="Ribosomal_L29"/>
    <property type="match status" value="1"/>
</dbReference>
<dbReference type="SUPFAM" id="SSF46561">
    <property type="entry name" value="Ribosomal protein L29 (L29p)"/>
    <property type="match status" value="1"/>
</dbReference>
<evidence type="ECO:0000255" key="1">
    <source>
        <dbReference type="HAMAP-Rule" id="MF_00374"/>
    </source>
</evidence>
<evidence type="ECO:0000305" key="2"/>